<protein>
    <recommendedName>
        <fullName evidence="1">Small ribosomal subunit protein uS7</fullName>
    </recommendedName>
    <alternativeName>
        <fullName evidence="2">30S ribosomal protein S7</fullName>
    </alternativeName>
</protein>
<proteinExistence type="inferred from homology"/>
<accession>A6TWI6</accession>
<sequence>MPRKGNVPKREVLADPIHGSMVVAKLINSVMLDGKKGTAQNIVYGAFDIIKERAEENPVEVFEKAMNNIMPVLEVKARRVGGANYQVPIEVRPERRQTLGLRWLVKYTRARGEKGMIEKLAKEIMDAANNTGSSVKKKEDTHKMAEANKAFAHYRW</sequence>
<name>RS7_ALKMQ</name>
<comment type="function">
    <text evidence="1">One of the primary rRNA binding proteins, it binds directly to 16S rRNA where it nucleates assembly of the head domain of the 30S subunit. Is located at the subunit interface close to the decoding center, probably blocks exit of the E-site tRNA.</text>
</comment>
<comment type="subunit">
    <text evidence="1">Part of the 30S ribosomal subunit. Contacts proteins S9 and S11.</text>
</comment>
<comment type="similarity">
    <text evidence="1">Belongs to the universal ribosomal protein uS7 family.</text>
</comment>
<keyword id="KW-1185">Reference proteome</keyword>
<keyword id="KW-0687">Ribonucleoprotein</keyword>
<keyword id="KW-0689">Ribosomal protein</keyword>
<keyword id="KW-0694">RNA-binding</keyword>
<keyword id="KW-0699">rRNA-binding</keyword>
<keyword id="KW-0820">tRNA-binding</keyword>
<dbReference type="EMBL" id="CP000724">
    <property type="protein sequence ID" value="ABR50554.1"/>
    <property type="molecule type" value="Genomic_DNA"/>
</dbReference>
<dbReference type="RefSeq" id="WP_012065445.1">
    <property type="nucleotide sequence ID" value="NC_009633.1"/>
</dbReference>
<dbReference type="SMR" id="A6TWI6"/>
<dbReference type="STRING" id="293826.Amet_4482"/>
<dbReference type="KEGG" id="amt:Amet_4482"/>
<dbReference type="eggNOG" id="COG0049">
    <property type="taxonomic scope" value="Bacteria"/>
</dbReference>
<dbReference type="HOGENOM" id="CLU_072226_1_1_9"/>
<dbReference type="OrthoDB" id="9807653at2"/>
<dbReference type="Proteomes" id="UP000001572">
    <property type="component" value="Chromosome"/>
</dbReference>
<dbReference type="GO" id="GO:0015935">
    <property type="term" value="C:small ribosomal subunit"/>
    <property type="evidence" value="ECO:0007669"/>
    <property type="project" value="InterPro"/>
</dbReference>
<dbReference type="GO" id="GO:0019843">
    <property type="term" value="F:rRNA binding"/>
    <property type="evidence" value="ECO:0007669"/>
    <property type="project" value="UniProtKB-UniRule"/>
</dbReference>
<dbReference type="GO" id="GO:0003735">
    <property type="term" value="F:structural constituent of ribosome"/>
    <property type="evidence" value="ECO:0007669"/>
    <property type="project" value="InterPro"/>
</dbReference>
<dbReference type="GO" id="GO:0000049">
    <property type="term" value="F:tRNA binding"/>
    <property type="evidence" value="ECO:0007669"/>
    <property type="project" value="UniProtKB-UniRule"/>
</dbReference>
<dbReference type="GO" id="GO:0006412">
    <property type="term" value="P:translation"/>
    <property type="evidence" value="ECO:0007669"/>
    <property type="project" value="UniProtKB-UniRule"/>
</dbReference>
<dbReference type="CDD" id="cd14869">
    <property type="entry name" value="uS7_Bacteria"/>
    <property type="match status" value="1"/>
</dbReference>
<dbReference type="FunFam" id="1.10.455.10:FF:000001">
    <property type="entry name" value="30S ribosomal protein S7"/>
    <property type="match status" value="1"/>
</dbReference>
<dbReference type="Gene3D" id="1.10.455.10">
    <property type="entry name" value="Ribosomal protein S7 domain"/>
    <property type="match status" value="1"/>
</dbReference>
<dbReference type="HAMAP" id="MF_00480_B">
    <property type="entry name" value="Ribosomal_uS7_B"/>
    <property type="match status" value="1"/>
</dbReference>
<dbReference type="InterPro" id="IPR000235">
    <property type="entry name" value="Ribosomal_uS7"/>
</dbReference>
<dbReference type="InterPro" id="IPR005717">
    <property type="entry name" value="Ribosomal_uS7_bac/org-type"/>
</dbReference>
<dbReference type="InterPro" id="IPR020606">
    <property type="entry name" value="Ribosomal_uS7_CS"/>
</dbReference>
<dbReference type="InterPro" id="IPR023798">
    <property type="entry name" value="Ribosomal_uS7_dom"/>
</dbReference>
<dbReference type="InterPro" id="IPR036823">
    <property type="entry name" value="Ribosomal_uS7_dom_sf"/>
</dbReference>
<dbReference type="NCBIfam" id="TIGR01029">
    <property type="entry name" value="rpsG_bact"/>
    <property type="match status" value="1"/>
</dbReference>
<dbReference type="PANTHER" id="PTHR11205">
    <property type="entry name" value="RIBOSOMAL PROTEIN S7"/>
    <property type="match status" value="1"/>
</dbReference>
<dbReference type="Pfam" id="PF00177">
    <property type="entry name" value="Ribosomal_S7"/>
    <property type="match status" value="1"/>
</dbReference>
<dbReference type="PIRSF" id="PIRSF002122">
    <property type="entry name" value="RPS7p_RPS7a_RPS5e_RPS7o"/>
    <property type="match status" value="1"/>
</dbReference>
<dbReference type="SUPFAM" id="SSF47973">
    <property type="entry name" value="Ribosomal protein S7"/>
    <property type="match status" value="1"/>
</dbReference>
<dbReference type="PROSITE" id="PS00052">
    <property type="entry name" value="RIBOSOMAL_S7"/>
    <property type="match status" value="1"/>
</dbReference>
<organism>
    <name type="scientific">Alkaliphilus metalliredigens (strain QYMF)</name>
    <dbReference type="NCBI Taxonomy" id="293826"/>
    <lineage>
        <taxon>Bacteria</taxon>
        <taxon>Bacillati</taxon>
        <taxon>Bacillota</taxon>
        <taxon>Clostridia</taxon>
        <taxon>Peptostreptococcales</taxon>
        <taxon>Natronincolaceae</taxon>
        <taxon>Alkaliphilus</taxon>
    </lineage>
</organism>
<feature type="chain" id="PRO_1000060412" description="Small ribosomal subunit protein uS7">
    <location>
        <begin position="1"/>
        <end position="156"/>
    </location>
</feature>
<reference key="1">
    <citation type="journal article" date="2016" name="Genome Announc.">
        <title>Complete genome sequence of Alkaliphilus metalliredigens strain QYMF, an alkaliphilic and metal-reducing bacterium isolated from borax-contaminated leachate ponds.</title>
        <authorList>
            <person name="Hwang C."/>
            <person name="Copeland A."/>
            <person name="Lucas S."/>
            <person name="Lapidus A."/>
            <person name="Barry K."/>
            <person name="Detter J.C."/>
            <person name="Glavina Del Rio T."/>
            <person name="Hammon N."/>
            <person name="Israni S."/>
            <person name="Dalin E."/>
            <person name="Tice H."/>
            <person name="Pitluck S."/>
            <person name="Chertkov O."/>
            <person name="Brettin T."/>
            <person name="Bruce D."/>
            <person name="Han C."/>
            <person name="Schmutz J."/>
            <person name="Larimer F."/>
            <person name="Land M.L."/>
            <person name="Hauser L."/>
            <person name="Kyrpides N."/>
            <person name="Mikhailova N."/>
            <person name="Ye Q."/>
            <person name="Zhou J."/>
            <person name="Richardson P."/>
            <person name="Fields M.W."/>
        </authorList>
    </citation>
    <scope>NUCLEOTIDE SEQUENCE [LARGE SCALE GENOMIC DNA]</scope>
    <source>
        <strain>QYMF</strain>
    </source>
</reference>
<gene>
    <name evidence="1" type="primary">rpsG</name>
    <name type="ordered locus">Amet_4482</name>
</gene>
<evidence type="ECO:0000255" key="1">
    <source>
        <dbReference type="HAMAP-Rule" id="MF_00480"/>
    </source>
</evidence>
<evidence type="ECO:0000305" key="2"/>